<accession>A6UBS2</accession>
<feature type="chain" id="PRO_1000000343" description="Adenine phosphoribosyltransferase">
    <location>
        <begin position="1"/>
        <end position="180"/>
    </location>
</feature>
<sequence>MTALQSDLISAIRSIPDYPKPGVMFRDITTLLGNPRAFRRAIDELVHPYAGTKVDKVAGIEARGFILGGAIAHQLSAGFIPIRKRGKLPHDTVRIAYSLEYGVDEMEMHRDAVVPGDKVILVDDLIATGGTAEGAAKLLQQMGAEIVAACFIIDLPELGGRRKLEALGVNVRTLIEFEGH</sequence>
<reference key="1">
    <citation type="submission" date="2007-06" db="EMBL/GenBank/DDBJ databases">
        <title>Complete sequence of Sinorhizobium medicae WSM419 chromosome.</title>
        <authorList>
            <consortium name="US DOE Joint Genome Institute"/>
            <person name="Copeland A."/>
            <person name="Lucas S."/>
            <person name="Lapidus A."/>
            <person name="Barry K."/>
            <person name="Glavina del Rio T."/>
            <person name="Dalin E."/>
            <person name="Tice H."/>
            <person name="Pitluck S."/>
            <person name="Chain P."/>
            <person name="Malfatti S."/>
            <person name="Shin M."/>
            <person name="Vergez L."/>
            <person name="Schmutz J."/>
            <person name="Larimer F."/>
            <person name="Land M."/>
            <person name="Hauser L."/>
            <person name="Kyrpides N."/>
            <person name="Mikhailova N."/>
            <person name="Reeve W.G."/>
            <person name="Richardson P."/>
        </authorList>
    </citation>
    <scope>NUCLEOTIDE SEQUENCE [LARGE SCALE GENOMIC DNA]</scope>
    <source>
        <strain>WSM419</strain>
    </source>
</reference>
<keyword id="KW-0963">Cytoplasm</keyword>
<keyword id="KW-0328">Glycosyltransferase</keyword>
<keyword id="KW-0660">Purine salvage</keyword>
<keyword id="KW-0808">Transferase</keyword>
<name>APT_SINMW</name>
<comment type="function">
    <text evidence="1">Catalyzes a salvage reaction resulting in the formation of AMP, that is energically less costly than de novo synthesis.</text>
</comment>
<comment type="catalytic activity">
    <reaction evidence="1">
        <text>AMP + diphosphate = 5-phospho-alpha-D-ribose 1-diphosphate + adenine</text>
        <dbReference type="Rhea" id="RHEA:16609"/>
        <dbReference type="ChEBI" id="CHEBI:16708"/>
        <dbReference type="ChEBI" id="CHEBI:33019"/>
        <dbReference type="ChEBI" id="CHEBI:58017"/>
        <dbReference type="ChEBI" id="CHEBI:456215"/>
        <dbReference type="EC" id="2.4.2.7"/>
    </reaction>
</comment>
<comment type="pathway">
    <text evidence="1">Purine metabolism; AMP biosynthesis via salvage pathway; AMP from adenine: step 1/1.</text>
</comment>
<comment type="subunit">
    <text evidence="1">Homodimer.</text>
</comment>
<comment type="subcellular location">
    <subcellularLocation>
        <location evidence="1">Cytoplasm</location>
    </subcellularLocation>
</comment>
<comment type="similarity">
    <text evidence="1">Belongs to the purine/pyrimidine phosphoribosyltransferase family.</text>
</comment>
<gene>
    <name evidence="1" type="primary">apt</name>
    <name type="ordered locus">Smed_2270</name>
</gene>
<dbReference type="EC" id="2.4.2.7" evidence="1"/>
<dbReference type="EMBL" id="CP000738">
    <property type="protein sequence ID" value="ABR61102.1"/>
    <property type="molecule type" value="Genomic_DNA"/>
</dbReference>
<dbReference type="RefSeq" id="WP_011976397.1">
    <property type="nucleotide sequence ID" value="NC_009636.1"/>
</dbReference>
<dbReference type="RefSeq" id="YP_001327937.1">
    <property type="nucleotide sequence ID" value="NC_009636.1"/>
</dbReference>
<dbReference type="SMR" id="A6UBS2"/>
<dbReference type="STRING" id="366394.Smed_2270"/>
<dbReference type="KEGG" id="smd:Smed_2270"/>
<dbReference type="PATRIC" id="fig|366394.8.peg.5443"/>
<dbReference type="eggNOG" id="COG0503">
    <property type="taxonomic scope" value="Bacteria"/>
</dbReference>
<dbReference type="HOGENOM" id="CLU_063339_3_0_5"/>
<dbReference type="OrthoDB" id="9803963at2"/>
<dbReference type="UniPathway" id="UPA00588">
    <property type="reaction ID" value="UER00646"/>
</dbReference>
<dbReference type="Proteomes" id="UP000001108">
    <property type="component" value="Chromosome"/>
</dbReference>
<dbReference type="GO" id="GO:0005737">
    <property type="term" value="C:cytoplasm"/>
    <property type="evidence" value="ECO:0007669"/>
    <property type="project" value="UniProtKB-SubCell"/>
</dbReference>
<dbReference type="GO" id="GO:0002055">
    <property type="term" value="F:adenine binding"/>
    <property type="evidence" value="ECO:0007669"/>
    <property type="project" value="TreeGrafter"/>
</dbReference>
<dbReference type="GO" id="GO:0003999">
    <property type="term" value="F:adenine phosphoribosyltransferase activity"/>
    <property type="evidence" value="ECO:0007669"/>
    <property type="project" value="UniProtKB-UniRule"/>
</dbReference>
<dbReference type="GO" id="GO:0016208">
    <property type="term" value="F:AMP binding"/>
    <property type="evidence" value="ECO:0007669"/>
    <property type="project" value="TreeGrafter"/>
</dbReference>
<dbReference type="GO" id="GO:0006168">
    <property type="term" value="P:adenine salvage"/>
    <property type="evidence" value="ECO:0007669"/>
    <property type="project" value="InterPro"/>
</dbReference>
<dbReference type="GO" id="GO:0044209">
    <property type="term" value="P:AMP salvage"/>
    <property type="evidence" value="ECO:0007669"/>
    <property type="project" value="UniProtKB-UniRule"/>
</dbReference>
<dbReference type="GO" id="GO:0006166">
    <property type="term" value="P:purine ribonucleoside salvage"/>
    <property type="evidence" value="ECO:0007669"/>
    <property type="project" value="UniProtKB-KW"/>
</dbReference>
<dbReference type="CDD" id="cd06223">
    <property type="entry name" value="PRTases_typeI"/>
    <property type="match status" value="1"/>
</dbReference>
<dbReference type="FunFam" id="3.40.50.2020:FF:000021">
    <property type="entry name" value="Adenine phosphoribosyltransferase"/>
    <property type="match status" value="1"/>
</dbReference>
<dbReference type="Gene3D" id="3.40.50.2020">
    <property type="match status" value="1"/>
</dbReference>
<dbReference type="HAMAP" id="MF_00004">
    <property type="entry name" value="Aden_phosphoribosyltr"/>
    <property type="match status" value="1"/>
</dbReference>
<dbReference type="InterPro" id="IPR005764">
    <property type="entry name" value="Ade_phspho_trans"/>
</dbReference>
<dbReference type="InterPro" id="IPR000836">
    <property type="entry name" value="PRibTrfase_dom"/>
</dbReference>
<dbReference type="InterPro" id="IPR029057">
    <property type="entry name" value="PRTase-like"/>
</dbReference>
<dbReference type="InterPro" id="IPR050054">
    <property type="entry name" value="UPRTase/APRTase"/>
</dbReference>
<dbReference type="NCBIfam" id="TIGR01090">
    <property type="entry name" value="apt"/>
    <property type="match status" value="1"/>
</dbReference>
<dbReference type="NCBIfam" id="NF002634">
    <property type="entry name" value="PRK02304.1-3"/>
    <property type="match status" value="1"/>
</dbReference>
<dbReference type="NCBIfam" id="NF002636">
    <property type="entry name" value="PRK02304.1-5"/>
    <property type="match status" value="1"/>
</dbReference>
<dbReference type="PANTHER" id="PTHR32315">
    <property type="entry name" value="ADENINE PHOSPHORIBOSYLTRANSFERASE"/>
    <property type="match status" value="1"/>
</dbReference>
<dbReference type="PANTHER" id="PTHR32315:SF3">
    <property type="entry name" value="ADENINE PHOSPHORIBOSYLTRANSFERASE"/>
    <property type="match status" value="1"/>
</dbReference>
<dbReference type="Pfam" id="PF00156">
    <property type="entry name" value="Pribosyltran"/>
    <property type="match status" value="1"/>
</dbReference>
<dbReference type="SUPFAM" id="SSF53271">
    <property type="entry name" value="PRTase-like"/>
    <property type="match status" value="1"/>
</dbReference>
<dbReference type="PROSITE" id="PS00103">
    <property type="entry name" value="PUR_PYR_PR_TRANSFER"/>
    <property type="match status" value="1"/>
</dbReference>
<protein>
    <recommendedName>
        <fullName evidence="1">Adenine phosphoribosyltransferase</fullName>
        <shortName evidence="1">APRT</shortName>
        <ecNumber evidence="1">2.4.2.7</ecNumber>
    </recommendedName>
</protein>
<proteinExistence type="inferred from homology"/>
<evidence type="ECO:0000255" key="1">
    <source>
        <dbReference type="HAMAP-Rule" id="MF_00004"/>
    </source>
</evidence>
<organism>
    <name type="scientific">Sinorhizobium medicae (strain WSM419)</name>
    <name type="common">Ensifer medicae</name>
    <dbReference type="NCBI Taxonomy" id="366394"/>
    <lineage>
        <taxon>Bacteria</taxon>
        <taxon>Pseudomonadati</taxon>
        <taxon>Pseudomonadota</taxon>
        <taxon>Alphaproteobacteria</taxon>
        <taxon>Hyphomicrobiales</taxon>
        <taxon>Rhizobiaceae</taxon>
        <taxon>Sinorhizobium/Ensifer group</taxon>
        <taxon>Sinorhizobium</taxon>
    </lineage>
</organism>